<feature type="chain" id="PRO_0000295808" description="Proton-coupled zinc antiporter SLC30A9, mitochondrial">
    <location>
        <begin position="1"/>
        <end position="573"/>
    </location>
</feature>
<feature type="transmembrane region" description="Helical" evidence="3">
    <location>
        <begin position="244"/>
        <end position="264"/>
    </location>
</feature>
<feature type="transmembrane region" description="Helical" evidence="3">
    <location>
        <begin position="319"/>
        <end position="339"/>
    </location>
</feature>
<feature type="transmembrane region" description="Helical" evidence="3">
    <location>
        <begin position="347"/>
        <end position="367"/>
    </location>
</feature>
<feature type="transmembrane region" description="Helical" evidence="3">
    <location>
        <begin position="397"/>
        <end position="417"/>
    </location>
</feature>
<feature type="transmembrane region" description="Helical" evidence="3">
    <location>
        <begin position="429"/>
        <end position="449"/>
    </location>
</feature>
<feature type="region of interest" description="Disordered" evidence="4">
    <location>
        <begin position="66"/>
        <end position="108"/>
    </location>
</feature>
<feature type="short sequence motif" description="LXXLL motif" evidence="2">
    <location>
        <begin position="467"/>
        <end position="471"/>
    </location>
</feature>
<feature type="compositionally biased region" description="Low complexity" evidence="4">
    <location>
        <begin position="90"/>
        <end position="104"/>
    </location>
</feature>
<reference key="1">
    <citation type="journal article" date="2013" name="Nature">
        <title>The zebrafish reference genome sequence and its relationship to the human genome.</title>
        <authorList>
            <person name="Howe K."/>
            <person name="Clark M.D."/>
            <person name="Torroja C.F."/>
            <person name="Torrance J."/>
            <person name="Berthelot C."/>
            <person name="Muffato M."/>
            <person name="Collins J.E."/>
            <person name="Humphray S."/>
            <person name="McLaren K."/>
            <person name="Matthews L."/>
            <person name="McLaren S."/>
            <person name="Sealy I."/>
            <person name="Caccamo M."/>
            <person name="Churcher C."/>
            <person name="Scott C."/>
            <person name="Barrett J.C."/>
            <person name="Koch R."/>
            <person name="Rauch G.J."/>
            <person name="White S."/>
            <person name="Chow W."/>
            <person name="Kilian B."/>
            <person name="Quintais L.T."/>
            <person name="Guerra-Assuncao J.A."/>
            <person name="Zhou Y."/>
            <person name="Gu Y."/>
            <person name="Yen J."/>
            <person name="Vogel J.H."/>
            <person name="Eyre T."/>
            <person name="Redmond S."/>
            <person name="Banerjee R."/>
            <person name="Chi J."/>
            <person name="Fu B."/>
            <person name="Langley E."/>
            <person name="Maguire S.F."/>
            <person name="Laird G.K."/>
            <person name="Lloyd D."/>
            <person name="Kenyon E."/>
            <person name="Donaldson S."/>
            <person name="Sehra H."/>
            <person name="Almeida-King J."/>
            <person name="Loveland J."/>
            <person name="Trevanion S."/>
            <person name="Jones M."/>
            <person name="Quail M."/>
            <person name="Willey D."/>
            <person name="Hunt A."/>
            <person name="Burton J."/>
            <person name="Sims S."/>
            <person name="McLay K."/>
            <person name="Plumb B."/>
            <person name="Davis J."/>
            <person name="Clee C."/>
            <person name="Oliver K."/>
            <person name="Clark R."/>
            <person name="Riddle C."/>
            <person name="Elliot D."/>
            <person name="Threadgold G."/>
            <person name="Harden G."/>
            <person name="Ware D."/>
            <person name="Begum S."/>
            <person name="Mortimore B."/>
            <person name="Kerry G."/>
            <person name="Heath P."/>
            <person name="Phillimore B."/>
            <person name="Tracey A."/>
            <person name="Corby N."/>
            <person name="Dunn M."/>
            <person name="Johnson C."/>
            <person name="Wood J."/>
            <person name="Clark S."/>
            <person name="Pelan S."/>
            <person name="Griffiths G."/>
            <person name="Smith M."/>
            <person name="Glithero R."/>
            <person name="Howden P."/>
            <person name="Barker N."/>
            <person name="Lloyd C."/>
            <person name="Stevens C."/>
            <person name="Harley J."/>
            <person name="Holt K."/>
            <person name="Panagiotidis G."/>
            <person name="Lovell J."/>
            <person name="Beasley H."/>
            <person name="Henderson C."/>
            <person name="Gordon D."/>
            <person name="Auger K."/>
            <person name="Wright D."/>
            <person name="Collins J."/>
            <person name="Raisen C."/>
            <person name="Dyer L."/>
            <person name="Leung K."/>
            <person name="Robertson L."/>
            <person name="Ambridge K."/>
            <person name="Leongamornlert D."/>
            <person name="McGuire S."/>
            <person name="Gilderthorp R."/>
            <person name="Griffiths C."/>
            <person name="Manthravadi D."/>
            <person name="Nichol S."/>
            <person name="Barker G."/>
            <person name="Whitehead S."/>
            <person name="Kay M."/>
            <person name="Brown J."/>
            <person name="Murnane C."/>
            <person name="Gray E."/>
            <person name="Humphries M."/>
            <person name="Sycamore N."/>
            <person name="Barker D."/>
            <person name="Saunders D."/>
            <person name="Wallis J."/>
            <person name="Babbage A."/>
            <person name="Hammond S."/>
            <person name="Mashreghi-Mohammadi M."/>
            <person name="Barr L."/>
            <person name="Martin S."/>
            <person name="Wray P."/>
            <person name="Ellington A."/>
            <person name="Matthews N."/>
            <person name="Ellwood M."/>
            <person name="Woodmansey R."/>
            <person name="Clark G."/>
            <person name="Cooper J."/>
            <person name="Tromans A."/>
            <person name="Grafham D."/>
            <person name="Skuce C."/>
            <person name="Pandian R."/>
            <person name="Andrews R."/>
            <person name="Harrison E."/>
            <person name="Kimberley A."/>
            <person name="Garnett J."/>
            <person name="Fosker N."/>
            <person name="Hall R."/>
            <person name="Garner P."/>
            <person name="Kelly D."/>
            <person name="Bird C."/>
            <person name="Palmer S."/>
            <person name="Gehring I."/>
            <person name="Berger A."/>
            <person name="Dooley C.M."/>
            <person name="Ersan-Urun Z."/>
            <person name="Eser C."/>
            <person name="Geiger H."/>
            <person name="Geisler M."/>
            <person name="Karotki L."/>
            <person name="Kirn A."/>
            <person name="Konantz J."/>
            <person name="Konantz M."/>
            <person name="Oberlander M."/>
            <person name="Rudolph-Geiger S."/>
            <person name="Teucke M."/>
            <person name="Lanz C."/>
            <person name="Raddatz G."/>
            <person name="Osoegawa K."/>
            <person name="Zhu B."/>
            <person name="Rapp A."/>
            <person name="Widaa S."/>
            <person name="Langford C."/>
            <person name="Yang F."/>
            <person name="Schuster S.C."/>
            <person name="Carter N.P."/>
            <person name="Harrow J."/>
            <person name="Ning Z."/>
            <person name="Herrero J."/>
            <person name="Searle S.M."/>
            <person name="Enright A."/>
            <person name="Geisler R."/>
            <person name="Plasterk R.H."/>
            <person name="Lee C."/>
            <person name="Westerfield M."/>
            <person name="de Jong P.J."/>
            <person name="Zon L.I."/>
            <person name="Postlethwait J.H."/>
            <person name="Nusslein-Volhard C."/>
            <person name="Hubbard T.J."/>
            <person name="Roest Crollius H."/>
            <person name="Rogers J."/>
            <person name="Stemple D.L."/>
        </authorList>
    </citation>
    <scope>NUCLEOTIDE SEQUENCE [LARGE SCALE GENOMIC DNA]</scope>
    <source>
        <strain>Tuebingen</strain>
    </source>
</reference>
<reference key="2">
    <citation type="submission" date="2004-12" db="EMBL/GenBank/DDBJ databases">
        <authorList>
            <consortium name="NIH - Zebrafish Gene Collection (ZGC) project"/>
        </authorList>
    </citation>
    <scope>NUCLEOTIDE SEQUENCE [LARGE SCALE MRNA]</scope>
</reference>
<dbReference type="EMBL" id="AL808108">
    <property type="protein sequence ID" value="CAE30408.1"/>
    <property type="status" value="ALT_SEQ"/>
    <property type="molecule type" value="Genomic_DNA"/>
</dbReference>
<dbReference type="EMBL" id="BC086961">
    <property type="protein sequence ID" value="AAH86961.1"/>
    <property type="molecule type" value="mRNA"/>
</dbReference>
<dbReference type="RefSeq" id="NP_001008575.1">
    <property type="nucleotide sequence ID" value="NM_001008575.1"/>
</dbReference>
<dbReference type="RefSeq" id="XP_005173391.1">
    <property type="nucleotide sequence ID" value="XM_005173334.3"/>
</dbReference>
<dbReference type="SMR" id="Q5PQZ3"/>
<dbReference type="FunCoup" id="Q5PQZ3">
    <property type="interactions" value="1054"/>
</dbReference>
<dbReference type="STRING" id="7955.ENSDARP00000074317"/>
<dbReference type="PaxDb" id="7955-ENSDARP00000074317"/>
<dbReference type="Ensembl" id="ENSDART00000079866">
    <property type="protein sequence ID" value="ENSDARP00000074317"/>
    <property type="gene ID" value="ENSDARG00000057272"/>
</dbReference>
<dbReference type="Ensembl" id="ENSDART00000180361">
    <property type="protein sequence ID" value="ENSDARP00000148224"/>
    <property type="gene ID" value="ENSDARG00000057272"/>
</dbReference>
<dbReference type="GeneID" id="497184"/>
<dbReference type="KEGG" id="dre:497184"/>
<dbReference type="AGR" id="ZFIN:ZDB-GENE-040724-254"/>
<dbReference type="CTD" id="10463"/>
<dbReference type="ZFIN" id="ZDB-GENE-040724-254">
    <property type="gene designation" value="slc30a9"/>
</dbReference>
<dbReference type="eggNOG" id="KOG2802">
    <property type="taxonomic scope" value="Eukaryota"/>
</dbReference>
<dbReference type="HOGENOM" id="CLU_021126_3_0_1"/>
<dbReference type="InParanoid" id="Q5PQZ3"/>
<dbReference type="OMA" id="HSMFSEC"/>
<dbReference type="OrthoDB" id="435980at2759"/>
<dbReference type="PhylomeDB" id="Q5PQZ3"/>
<dbReference type="TreeFam" id="TF314526"/>
<dbReference type="PRO" id="PR:Q5PQZ3"/>
<dbReference type="Proteomes" id="UP000000437">
    <property type="component" value="Chromosome 14"/>
</dbReference>
<dbReference type="Bgee" id="ENSDARG00000057272">
    <property type="expression patterns" value="Expressed in camera-type eye and 27 other cell types or tissues"/>
</dbReference>
<dbReference type="ExpressionAtlas" id="Q5PQZ3">
    <property type="expression patterns" value="baseline"/>
</dbReference>
<dbReference type="GO" id="GO:0031410">
    <property type="term" value="C:cytoplasmic vesicle"/>
    <property type="evidence" value="ECO:0000250"/>
    <property type="project" value="UniProtKB"/>
</dbReference>
<dbReference type="GO" id="GO:0005783">
    <property type="term" value="C:endoplasmic reticulum"/>
    <property type="evidence" value="ECO:0000250"/>
    <property type="project" value="UniProtKB"/>
</dbReference>
<dbReference type="GO" id="GO:0031966">
    <property type="term" value="C:mitochondrial membrane"/>
    <property type="evidence" value="ECO:0000250"/>
    <property type="project" value="UniProtKB"/>
</dbReference>
<dbReference type="GO" id="GO:0005634">
    <property type="term" value="C:nucleus"/>
    <property type="evidence" value="ECO:0007669"/>
    <property type="project" value="UniProtKB-SubCell"/>
</dbReference>
<dbReference type="GO" id="GO:0015297">
    <property type="term" value="F:antiporter activity"/>
    <property type="evidence" value="ECO:0007669"/>
    <property type="project" value="UniProtKB-KW"/>
</dbReference>
<dbReference type="GO" id="GO:0005385">
    <property type="term" value="F:zinc ion transmembrane transporter activity"/>
    <property type="evidence" value="ECO:0000250"/>
    <property type="project" value="UniProtKB"/>
</dbReference>
<dbReference type="GO" id="GO:0006882">
    <property type="term" value="P:intracellular zinc ion homeostasis"/>
    <property type="evidence" value="ECO:0000250"/>
    <property type="project" value="UniProtKB"/>
</dbReference>
<dbReference type="GO" id="GO:0010821">
    <property type="term" value="P:regulation of mitochondrion organization"/>
    <property type="evidence" value="ECO:0000250"/>
    <property type="project" value="UniProtKB"/>
</dbReference>
<dbReference type="GO" id="GO:0006829">
    <property type="term" value="P:zinc ion transport"/>
    <property type="evidence" value="ECO:0000250"/>
    <property type="project" value="UniProtKB"/>
</dbReference>
<dbReference type="CDD" id="cd21078">
    <property type="entry name" value="NTD_ZNT9"/>
    <property type="match status" value="1"/>
</dbReference>
<dbReference type="FunFam" id="1.20.1510.10:FF:000004">
    <property type="entry name" value="zinc transporter 9 isoform X1"/>
    <property type="match status" value="1"/>
</dbReference>
<dbReference type="FunFam" id="3.90.530.10:FF:000002">
    <property type="entry name" value="zinc transporter 9 isoform X1"/>
    <property type="match status" value="1"/>
</dbReference>
<dbReference type="Gene3D" id="1.20.1510.10">
    <property type="entry name" value="Cation efflux protein transmembrane domain"/>
    <property type="match status" value="1"/>
</dbReference>
<dbReference type="Gene3D" id="3.90.530.10">
    <property type="entry name" value="XPA C-terminal domain"/>
    <property type="match status" value="1"/>
</dbReference>
<dbReference type="InterPro" id="IPR002524">
    <property type="entry name" value="Cation_efflux"/>
</dbReference>
<dbReference type="InterPro" id="IPR027469">
    <property type="entry name" value="Cation_efflux_TMD_sf"/>
</dbReference>
<dbReference type="InterPro" id="IPR009061">
    <property type="entry name" value="DNA-bd_dom_put_sf"/>
</dbReference>
<dbReference type="InterPro" id="IPR040177">
    <property type="entry name" value="SLC30A9"/>
</dbReference>
<dbReference type="InterPro" id="IPR037129">
    <property type="entry name" value="XPA_sf"/>
</dbReference>
<dbReference type="NCBIfam" id="TIGR01297">
    <property type="entry name" value="CDF"/>
    <property type="match status" value="1"/>
</dbReference>
<dbReference type="PANTHER" id="PTHR13414">
    <property type="entry name" value="HUEL-CATION TRANSPORTER"/>
    <property type="match status" value="1"/>
</dbReference>
<dbReference type="PANTHER" id="PTHR13414:SF9">
    <property type="entry name" value="PROTON-COUPLED ZINC ANTIPORTER SLC30A9, MITOCHONDRIAL"/>
    <property type="match status" value="1"/>
</dbReference>
<dbReference type="Pfam" id="PF01545">
    <property type="entry name" value="Cation_efflux"/>
    <property type="match status" value="1"/>
</dbReference>
<dbReference type="SUPFAM" id="SSF161111">
    <property type="entry name" value="Cation efflux protein transmembrane domain-like"/>
    <property type="match status" value="1"/>
</dbReference>
<dbReference type="SUPFAM" id="SSF46955">
    <property type="entry name" value="Putative DNA-binding domain"/>
    <property type="match status" value="1"/>
</dbReference>
<organism>
    <name type="scientific">Danio rerio</name>
    <name type="common">Zebrafish</name>
    <name type="synonym">Brachydanio rerio</name>
    <dbReference type="NCBI Taxonomy" id="7955"/>
    <lineage>
        <taxon>Eukaryota</taxon>
        <taxon>Metazoa</taxon>
        <taxon>Chordata</taxon>
        <taxon>Craniata</taxon>
        <taxon>Vertebrata</taxon>
        <taxon>Euteleostomi</taxon>
        <taxon>Actinopterygii</taxon>
        <taxon>Neopterygii</taxon>
        <taxon>Teleostei</taxon>
        <taxon>Ostariophysi</taxon>
        <taxon>Cypriniformes</taxon>
        <taxon>Danionidae</taxon>
        <taxon>Danioninae</taxon>
        <taxon>Danio</taxon>
    </lineage>
</organism>
<accession>Q5PQZ3</accession>
<accession>Q7SZY6</accession>
<keyword id="KW-0050">Antiport</keyword>
<keyword id="KW-0256">Endoplasmic reticulum</keyword>
<keyword id="KW-0406">Ion transport</keyword>
<keyword id="KW-0472">Membrane</keyword>
<keyword id="KW-0496">Mitochondrion</keyword>
<keyword id="KW-0539">Nucleus</keyword>
<keyword id="KW-1185">Reference proteome</keyword>
<keyword id="KW-0804">Transcription</keyword>
<keyword id="KW-0805">Transcription regulation</keyword>
<keyword id="KW-0812">Transmembrane</keyword>
<keyword id="KW-1133">Transmembrane helix</keyword>
<keyword id="KW-0813">Transport</keyword>
<keyword id="KW-0862">Zinc</keyword>
<keyword id="KW-0864">Zinc transport</keyword>
<proteinExistence type="evidence at transcript level"/>
<protein>
    <recommendedName>
        <fullName>Proton-coupled zinc antiporter SLC30A9, mitochondrial</fullName>
    </recommendedName>
    <alternativeName>
        <fullName>Solute carrier family 30 member 9</fullName>
    </alternativeName>
    <alternativeName>
        <fullName>Zinc transporter 9</fullName>
        <shortName>ZnT-9</shortName>
    </alternativeName>
</protein>
<gene>
    <name type="primary">slc30a9</name>
</gene>
<evidence type="ECO:0000250" key="1">
    <source>
        <dbReference type="UniProtKB" id="Q5IRJ6"/>
    </source>
</evidence>
<evidence type="ECO:0000250" key="2">
    <source>
        <dbReference type="UniProtKB" id="Q6PML9"/>
    </source>
</evidence>
<evidence type="ECO:0000255" key="3"/>
<evidence type="ECO:0000256" key="4">
    <source>
        <dbReference type="SAM" id="MobiDB-lite"/>
    </source>
</evidence>
<evidence type="ECO:0000305" key="5"/>
<sequence>MFPCLAHRPWQVLCRVYLQQRAPLSQRSSKISKPCFGWQSRGGVHKLWFSFPDFRVTSLTWTQVQNCSTSGSGKDGSPTRPEEPKTTEKAQAAQPAAKGAGSKPQGLTKAESIQVKVRAVLKKREYGLKYTQNNFITAVRAMNEFCLKPSDLEHLRKIRRRSPHDDTEAFTVFLRSDVEAKALEVWGSQEALARERDQRKEVEREYQENIFRNQKLLKEYKDFWGNTKPRSRKRATFLQGPGKVVMVAICINGLNFFFKLLAWVYTGSASMFSEAIHSLADTCNQALLALGISQSVRNPDAIHPYGFSNMRYIASLISGVGIFMMGAGLSWYHGIMGLLHPQPIESLLWAYCILAGSLVSEGATLLVAINEIKKSARTQGLSFYEYVMQSRDPSTNVVLLEDAAAVLGVVLAAGCMGLTSLTGNPYYDSLGSLGVGTLLGTVSAFLIYTNTEALLGRSIQAEHMQKLTEFLENDPAVRAIHDVKATDMGLSKVRFKAEVDFDGRVVTRSYLEKQDIEQILNEIQQVKTPEELENFMLKHGENIIDTLGAEVDRLEKELKQRNPEVRHVDLEIL</sequence>
<comment type="function">
    <text evidence="1 2">Mitochondrial proton-coupled zinc ion antiporter mediating the export of zinc from the mitochondria and involved in zinc homeostasis, zinc mobilization as well as mitochondrial morphology and health (By similarity). In nucleus, may function as a secondary coactivator for nuclear receptors (By similarity).</text>
</comment>
<comment type="catalytic activity">
    <reaction evidence="2">
        <text>Zn(2+)(in) + 2 H(+)(out) = Zn(2+)(out) + 2 H(+)(in)</text>
        <dbReference type="Rhea" id="RHEA:72627"/>
        <dbReference type="ChEBI" id="CHEBI:15378"/>
        <dbReference type="ChEBI" id="CHEBI:29105"/>
    </reaction>
</comment>
<comment type="subcellular location">
    <subcellularLocation>
        <location evidence="2">Mitochondrion membrane</location>
        <topology evidence="2">Multi-pass membrane protein</topology>
    </subcellularLocation>
    <subcellularLocation>
        <location evidence="2">Nucleus</location>
    </subcellularLocation>
    <subcellularLocation>
        <location evidence="2">Endoplasmic reticulum</location>
    </subcellularLocation>
    <text evidence="2">Partial co-localization with endoplasmic reticulum. Linked to mitochondrial ribosomes.</text>
</comment>
<comment type="similarity">
    <text evidence="5">Belongs to the cation diffusion facilitator (CDF) transporter (TC 2.A.4) family. SLC30A subfamily.</text>
</comment>
<comment type="sequence caution" evidence="5">
    <conflict type="erroneous gene model prediction">
        <sequence resource="EMBL-CDS" id="CAE30408"/>
    </conflict>
</comment>
<name>ZNT9_DANRE</name>